<proteinExistence type="predicted"/>
<keyword id="KW-1185">Reference proteome</keyword>
<feature type="chain" id="PRO_0000168672" description="Uncharacterized protein YbdN">
    <location>
        <begin position="1"/>
        <end position="406"/>
    </location>
</feature>
<reference key="1">
    <citation type="journal article" date="1996" name="DNA Res.">
        <title>A 718-kb DNA sequence of the Escherichia coli K-12 genome corresponding to the 12.7-28.0 min region on the linkage map.</title>
        <authorList>
            <person name="Oshima T."/>
            <person name="Aiba H."/>
            <person name="Baba T."/>
            <person name="Fujita K."/>
            <person name="Hayashi K."/>
            <person name="Honjo A."/>
            <person name="Ikemoto K."/>
            <person name="Inada T."/>
            <person name="Itoh T."/>
            <person name="Kajihara M."/>
            <person name="Kanai K."/>
            <person name="Kashimoto K."/>
            <person name="Kimura S."/>
            <person name="Kitagawa M."/>
            <person name="Makino K."/>
            <person name="Masuda S."/>
            <person name="Miki T."/>
            <person name="Mizobuchi K."/>
            <person name="Mori H."/>
            <person name="Motomura K."/>
            <person name="Nakamura Y."/>
            <person name="Nashimoto H."/>
            <person name="Nishio Y."/>
            <person name="Saito N."/>
            <person name="Sampei G."/>
            <person name="Seki Y."/>
            <person name="Tagami H."/>
            <person name="Takemoto K."/>
            <person name="Wada C."/>
            <person name="Yamamoto Y."/>
            <person name="Yano M."/>
            <person name="Horiuchi T."/>
        </authorList>
    </citation>
    <scope>NUCLEOTIDE SEQUENCE [LARGE SCALE GENOMIC DNA]</scope>
    <source>
        <strain>K12 / W3110 / ATCC 27325 / DSM 5911</strain>
    </source>
</reference>
<reference key="2">
    <citation type="submission" date="1997-01" db="EMBL/GenBank/DDBJ databases">
        <title>Sequence of minutes 4-25 of Escherichia coli.</title>
        <authorList>
            <person name="Chung E."/>
            <person name="Allen E."/>
            <person name="Araujo R."/>
            <person name="Aparicio A.M."/>
            <person name="Davis K."/>
            <person name="Duncan M."/>
            <person name="Federspiel N."/>
            <person name="Hyman R."/>
            <person name="Kalman S."/>
            <person name="Komp C."/>
            <person name="Kurdi O."/>
            <person name="Lew H."/>
            <person name="Lin D."/>
            <person name="Namath A."/>
            <person name="Oefner P."/>
            <person name="Roberts D."/>
            <person name="Schramm S."/>
            <person name="Davis R.W."/>
        </authorList>
    </citation>
    <scope>NUCLEOTIDE SEQUENCE [LARGE SCALE GENOMIC DNA]</scope>
    <source>
        <strain>K12 / MG1655 / ATCC 47076</strain>
    </source>
</reference>
<reference key="3">
    <citation type="journal article" date="1997" name="Science">
        <title>The complete genome sequence of Escherichia coli K-12.</title>
        <authorList>
            <person name="Blattner F.R."/>
            <person name="Plunkett G. III"/>
            <person name="Bloch C.A."/>
            <person name="Perna N.T."/>
            <person name="Burland V."/>
            <person name="Riley M."/>
            <person name="Collado-Vides J."/>
            <person name="Glasner J.D."/>
            <person name="Rode C.K."/>
            <person name="Mayhew G.F."/>
            <person name="Gregor J."/>
            <person name="Davis N.W."/>
            <person name="Kirkpatrick H.A."/>
            <person name="Goeden M.A."/>
            <person name="Rose D.J."/>
            <person name="Mau B."/>
            <person name="Shao Y."/>
        </authorList>
    </citation>
    <scope>NUCLEOTIDE SEQUENCE [LARGE SCALE GENOMIC DNA]</scope>
    <source>
        <strain>K12 / MG1655 / ATCC 47076</strain>
    </source>
</reference>
<reference key="4">
    <citation type="journal article" date="2006" name="Mol. Syst. Biol.">
        <title>Highly accurate genome sequences of Escherichia coli K-12 strains MG1655 and W3110.</title>
        <authorList>
            <person name="Hayashi K."/>
            <person name="Morooka N."/>
            <person name="Yamamoto Y."/>
            <person name="Fujita K."/>
            <person name="Isono K."/>
            <person name="Choi S."/>
            <person name="Ohtsubo E."/>
            <person name="Baba T."/>
            <person name="Wanner B.L."/>
            <person name="Mori H."/>
            <person name="Horiuchi T."/>
        </authorList>
    </citation>
    <scope>NUCLEOTIDE SEQUENCE [LARGE SCALE GENOMIC DNA]</scope>
    <source>
        <strain>K12 / W3110 / ATCC 27325 / DSM 5911</strain>
    </source>
</reference>
<accession>P77216</accession>
<organism>
    <name type="scientific">Escherichia coli (strain K12)</name>
    <dbReference type="NCBI Taxonomy" id="83333"/>
    <lineage>
        <taxon>Bacteria</taxon>
        <taxon>Pseudomonadati</taxon>
        <taxon>Pseudomonadota</taxon>
        <taxon>Gammaproteobacteria</taxon>
        <taxon>Enterobacterales</taxon>
        <taxon>Enterobacteriaceae</taxon>
        <taxon>Escherichia</taxon>
    </lineage>
</organism>
<dbReference type="EMBL" id="U82598">
    <property type="protein sequence ID" value="AAB40803.1"/>
    <property type="molecule type" value="Genomic_DNA"/>
</dbReference>
<dbReference type="EMBL" id="U00096">
    <property type="protein sequence ID" value="AAC73703.1"/>
    <property type="molecule type" value="Genomic_DNA"/>
</dbReference>
<dbReference type="EMBL" id="AP009048">
    <property type="protein sequence ID" value="BAA35232.1"/>
    <property type="molecule type" value="Genomic_DNA"/>
</dbReference>
<dbReference type="PIR" id="H64793">
    <property type="entry name" value="H64793"/>
</dbReference>
<dbReference type="RefSeq" id="NP_415135.1">
    <property type="nucleotide sequence ID" value="NC_000913.3"/>
</dbReference>
<dbReference type="RefSeq" id="WP_000029814.1">
    <property type="nucleotide sequence ID" value="NZ_LN832404.1"/>
</dbReference>
<dbReference type="BioGRID" id="4260904">
    <property type="interactions" value="9"/>
</dbReference>
<dbReference type="BioGRID" id="849590">
    <property type="interactions" value="1"/>
</dbReference>
<dbReference type="DIP" id="DIP-11352N"/>
<dbReference type="FunCoup" id="P77216">
    <property type="interactions" value="214"/>
</dbReference>
<dbReference type="IntAct" id="P77216">
    <property type="interactions" value="7"/>
</dbReference>
<dbReference type="STRING" id="511145.b0602"/>
<dbReference type="PaxDb" id="511145-b0602"/>
<dbReference type="EnsemblBacteria" id="AAC73703">
    <property type="protein sequence ID" value="AAC73703"/>
    <property type="gene ID" value="b0602"/>
</dbReference>
<dbReference type="GeneID" id="945205"/>
<dbReference type="KEGG" id="ecj:JW0595"/>
<dbReference type="KEGG" id="eco:b0602"/>
<dbReference type="KEGG" id="ecoc:C3026_03010"/>
<dbReference type="PATRIC" id="fig|511145.12.peg.631"/>
<dbReference type="EchoBASE" id="EB3304"/>
<dbReference type="eggNOG" id="COG3969">
    <property type="taxonomic scope" value="Bacteria"/>
</dbReference>
<dbReference type="HOGENOM" id="CLU_036373_0_0_6"/>
<dbReference type="InParanoid" id="P77216"/>
<dbReference type="OMA" id="PLRYMRI"/>
<dbReference type="OrthoDB" id="9774475at2"/>
<dbReference type="PhylomeDB" id="P77216"/>
<dbReference type="BioCyc" id="EcoCyc:G6331-MONOMER"/>
<dbReference type="PRO" id="PR:P77216"/>
<dbReference type="Proteomes" id="UP000000625">
    <property type="component" value="Chromosome"/>
</dbReference>
<dbReference type="GO" id="GO:0003824">
    <property type="term" value="F:catalytic activity"/>
    <property type="evidence" value="ECO:0007669"/>
    <property type="project" value="InterPro"/>
</dbReference>
<dbReference type="GO" id="GO:0071453">
    <property type="term" value="P:cellular response to oxygen levels"/>
    <property type="evidence" value="ECO:0000318"/>
    <property type="project" value="GO_Central"/>
</dbReference>
<dbReference type="CDD" id="cd23947">
    <property type="entry name" value="PAPS_reductase-like_YbdN"/>
    <property type="match status" value="1"/>
</dbReference>
<dbReference type="Gene3D" id="3.40.50.620">
    <property type="entry name" value="HUPs"/>
    <property type="match status" value="1"/>
</dbReference>
<dbReference type="InterPro" id="IPR021845">
    <property type="entry name" value="DUF3440"/>
</dbReference>
<dbReference type="InterPro" id="IPR002500">
    <property type="entry name" value="PAPS_reduct_dom"/>
</dbReference>
<dbReference type="InterPro" id="IPR014729">
    <property type="entry name" value="Rossmann-like_a/b/a_fold"/>
</dbReference>
<dbReference type="PANTHER" id="PTHR30083:SF0">
    <property type="entry name" value="3'-PHOSPHOADENOSINE 5'-PHOSPHOSULFATE SULFOTRANSFERASE (PAPS REDUCTASE)_FAD SYNTHETASE"/>
    <property type="match status" value="1"/>
</dbReference>
<dbReference type="PANTHER" id="PTHR30083">
    <property type="entry name" value="TRANSCRIPTIONAL REGULATOR-RELATED"/>
    <property type="match status" value="1"/>
</dbReference>
<dbReference type="Pfam" id="PF11922">
    <property type="entry name" value="DUF3440"/>
    <property type="match status" value="2"/>
</dbReference>
<dbReference type="Pfam" id="PF01507">
    <property type="entry name" value="PAPS_reduct"/>
    <property type="match status" value="1"/>
</dbReference>
<dbReference type="SUPFAM" id="SSF52402">
    <property type="entry name" value="Adenine nucleotide alpha hydrolases-like"/>
    <property type="match status" value="1"/>
</dbReference>
<gene>
    <name type="primary">ybdN</name>
    <name type="ordered locus">b0602</name>
    <name type="ordered locus">JW0595</name>
</gene>
<protein>
    <recommendedName>
        <fullName>Uncharacterized protein YbdN</fullName>
    </recommendedName>
</protein>
<sequence length="406" mass="47827">MSIYKIPLPLNILEAARERITWTLNTLPRVCVSFSGGKDSGLMLHLTAELARQMGKKICVLFIDWEAQFSCTINYVQSLRELYTDVIEEFYWVALPLTTQNSLSQYQPEWQCWEPDVEWVRQPPQDAITDPDFFCFYQPGMTFEQFVREFAEWFSQKRPAAMMIGIRADESYNRFVAIASLNKQRFADDKPWTTAAPGGHSWYIYPIYDWKVADIWTWYANHQSLCNPLYNLMYQAGVPLRHMRICEPFGPEQRQGLWLYHVIEPDRWAAMCARVSGVKSGGIYAGHDNHFYGHRKILKPEHLDWQEYALLLLNSMPEKTAEHYRNKIAIYLHWYQKKGIEVPQTQQGDIGAKDIPSWRRICKVLLNNDYWCRALSFSPTKSKNYQRYNERIKGKRQEWGILCNND</sequence>
<name>YBDN_ECOLI</name>